<name>RS8_CHLTB</name>
<reference key="1">
    <citation type="journal article" date="2008" name="Genome Res.">
        <title>Chlamydia trachomatis: genome sequence analysis of lymphogranuloma venereum isolates.</title>
        <authorList>
            <person name="Thomson N.R."/>
            <person name="Holden M.T.G."/>
            <person name="Carder C."/>
            <person name="Lennard N."/>
            <person name="Lockey S.J."/>
            <person name="Marsh P."/>
            <person name="Skipp P."/>
            <person name="O'Connor C.D."/>
            <person name="Goodhead I."/>
            <person name="Norbertzcak H."/>
            <person name="Harris B."/>
            <person name="Ormond D."/>
            <person name="Rance R."/>
            <person name="Quail M.A."/>
            <person name="Parkhill J."/>
            <person name="Stephens R.S."/>
            <person name="Clarke I.N."/>
        </authorList>
    </citation>
    <scope>NUCLEOTIDE SEQUENCE [LARGE SCALE GENOMIC DNA]</scope>
    <source>
        <strain>UCH-1/proctitis</strain>
    </source>
</reference>
<organism>
    <name type="scientific">Chlamydia trachomatis serovar L2b (strain UCH-1/proctitis)</name>
    <dbReference type="NCBI Taxonomy" id="471473"/>
    <lineage>
        <taxon>Bacteria</taxon>
        <taxon>Pseudomonadati</taxon>
        <taxon>Chlamydiota</taxon>
        <taxon>Chlamydiia</taxon>
        <taxon>Chlamydiales</taxon>
        <taxon>Chlamydiaceae</taxon>
        <taxon>Chlamydia/Chlamydophila group</taxon>
        <taxon>Chlamydia</taxon>
    </lineage>
</organism>
<dbReference type="EMBL" id="AM884177">
    <property type="protein sequence ID" value="CAP07169.1"/>
    <property type="molecule type" value="Genomic_DNA"/>
</dbReference>
<dbReference type="RefSeq" id="WP_009872717.1">
    <property type="nucleotide sequence ID" value="NC_010280.2"/>
</dbReference>
<dbReference type="SMR" id="B0BCF4"/>
<dbReference type="KEGG" id="ctl:CTLon_0772"/>
<dbReference type="HOGENOM" id="CLU_098428_0_2_0"/>
<dbReference type="Proteomes" id="UP001154401">
    <property type="component" value="Chromosome"/>
</dbReference>
<dbReference type="GO" id="GO:1990904">
    <property type="term" value="C:ribonucleoprotein complex"/>
    <property type="evidence" value="ECO:0007669"/>
    <property type="project" value="UniProtKB-KW"/>
</dbReference>
<dbReference type="GO" id="GO:0005840">
    <property type="term" value="C:ribosome"/>
    <property type="evidence" value="ECO:0007669"/>
    <property type="project" value="UniProtKB-KW"/>
</dbReference>
<dbReference type="GO" id="GO:0019843">
    <property type="term" value="F:rRNA binding"/>
    <property type="evidence" value="ECO:0007669"/>
    <property type="project" value="UniProtKB-UniRule"/>
</dbReference>
<dbReference type="GO" id="GO:0003735">
    <property type="term" value="F:structural constituent of ribosome"/>
    <property type="evidence" value="ECO:0007669"/>
    <property type="project" value="InterPro"/>
</dbReference>
<dbReference type="GO" id="GO:0006412">
    <property type="term" value="P:translation"/>
    <property type="evidence" value="ECO:0007669"/>
    <property type="project" value="UniProtKB-UniRule"/>
</dbReference>
<dbReference type="FunFam" id="3.30.1370.30:FF:000002">
    <property type="entry name" value="30S ribosomal protein S8"/>
    <property type="match status" value="1"/>
</dbReference>
<dbReference type="FunFam" id="3.30.1490.10:FF:000001">
    <property type="entry name" value="30S ribosomal protein S8"/>
    <property type="match status" value="1"/>
</dbReference>
<dbReference type="Gene3D" id="3.30.1370.30">
    <property type="match status" value="1"/>
</dbReference>
<dbReference type="Gene3D" id="3.30.1490.10">
    <property type="match status" value="1"/>
</dbReference>
<dbReference type="HAMAP" id="MF_01302_B">
    <property type="entry name" value="Ribosomal_uS8_B"/>
    <property type="match status" value="1"/>
</dbReference>
<dbReference type="InterPro" id="IPR000630">
    <property type="entry name" value="Ribosomal_uS8"/>
</dbReference>
<dbReference type="InterPro" id="IPR047863">
    <property type="entry name" value="Ribosomal_uS8_CS"/>
</dbReference>
<dbReference type="InterPro" id="IPR035987">
    <property type="entry name" value="Ribosomal_uS8_sf"/>
</dbReference>
<dbReference type="NCBIfam" id="NF001109">
    <property type="entry name" value="PRK00136.1"/>
    <property type="match status" value="1"/>
</dbReference>
<dbReference type="PANTHER" id="PTHR11758">
    <property type="entry name" value="40S RIBOSOMAL PROTEIN S15A"/>
    <property type="match status" value="1"/>
</dbReference>
<dbReference type="Pfam" id="PF00410">
    <property type="entry name" value="Ribosomal_S8"/>
    <property type="match status" value="1"/>
</dbReference>
<dbReference type="SUPFAM" id="SSF56047">
    <property type="entry name" value="Ribosomal protein S8"/>
    <property type="match status" value="1"/>
</dbReference>
<dbReference type="PROSITE" id="PS00053">
    <property type="entry name" value="RIBOSOMAL_S8"/>
    <property type="match status" value="1"/>
</dbReference>
<comment type="function">
    <text evidence="1">One of the primary rRNA binding proteins, it binds directly to 16S rRNA central domain where it helps coordinate assembly of the platform of the 30S subunit.</text>
</comment>
<comment type="subunit">
    <text evidence="1">Part of the 30S ribosomal subunit. Contacts proteins S5 and S12.</text>
</comment>
<comment type="similarity">
    <text evidence="1">Belongs to the universal ribosomal protein uS8 family.</text>
</comment>
<keyword id="KW-0687">Ribonucleoprotein</keyword>
<keyword id="KW-0689">Ribosomal protein</keyword>
<keyword id="KW-0694">RNA-binding</keyword>
<keyword id="KW-0699">rRNA-binding</keyword>
<accession>B0BCF4</accession>
<sequence>MGMTSDSIANLLTRIRNALMAEHLYIDIEHSKMLEAIVRILKQHGFVAHFLVKEENRKRLMRVFLRYGEDRRPVIHALKRVSKPSRRVYVSAAKIPYVFGNMGIAVLSTPQGVLEGSVARAKNVGGELLCLVW</sequence>
<proteinExistence type="inferred from homology"/>
<protein>
    <recommendedName>
        <fullName evidence="1">Small ribosomal subunit protein uS8</fullName>
    </recommendedName>
    <alternativeName>
        <fullName evidence="2">30S ribosomal protein S8</fullName>
    </alternativeName>
</protein>
<evidence type="ECO:0000255" key="1">
    <source>
        <dbReference type="HAMAP-Rule" id="MF_01302"/>
    </source>
</evidence>
<evidence type="ECO:0000305" key="2"/>
<gene>
    <name evidence="1" type="primary">rpsH</name>
    <name type="ordered locus">CTLon_0772</name>
</gene>
<feature type="chain" id="PRO_1000140533" description="Small ribosomal subunit protein uS8">
    <location>
        <begin position="1"/>
        <end position="133"/>
    </location>
</feature>